<sequence length="84" mass="9214">MAHKKAGGSSRNGRDSKGQRLGCKKFGGETVKAGNIIYRQRGTQIHPGNNVGCGKDYTLFALIEGIVTFERMGRDRKKVSVYPN</sequence>
<reference key="1">
    <citation type="submission" date="2006-10" db="EMBL/GenBank/DDBJ databases">
        <title>Complete sequence of chromosome of Pelobacter propionicus DSM 2379.</title>
        <authorList>
            <consortium name="US DOE Joint Genome Institute"/>
            <person name="Copeland A."/>
            <person name="Lucas S."/>
            <person name="Lapidus A."/>
            <person name="Barry K."/>
            <person name="Detter J.C."/>
            <person name="Glavina del Rio T."/>
            <person name="Hammon N."/>
            <person name="Israni S."/>
            <person name="Dalin E."/>
            <person name="Tice H."/>
            <person name="Pitluck S."/>
            <person name="Saunders E."/>
            <person name="Brettin T."/>
            <person name="Bruce D."/>
            <person name="Han C."/>
            <person name="Tapia R."/>
            <person name="Schmutz J."/>
            <person name="Larimer F."/>
            <person name="Land M."/>
            <person name="Hauser L."/>
            <person name="Kyrpides N."/>
            <person name="Kim E."/>
            <person name="Lovley D."/>
            <person name="Richardson P."/>
        </authorList>
    </citation>
    <scope>NUCLEOTIDE SEQUENCE [LARGE SCALE GENOMIC DNA]</scope>
    <source>
        <strain>DSM 2379 / NBRC 103807 / OttBd1</strain>
    </source>
</reference>
<protein>
    <recommendedName>
        <fullName evidence="1">Large ribosomal subunit protein bL27</fullName>
    </recommendedName>
    <alternativeName>
        <fullName evidence="3">50S ribosomal protein L27</fullName>
    </alternativeName>
</protein>
<comment type="similarity">
    <text evidence="1">Belongs to the bacterial ribosomal protein bL27 family.</text>
</comment>
<feature type="chain" id="PRO_1000017544" description="Large ribosomal subunit protein bL27">
    <location>
        <begin position="1"/>
        <end position="84"/>
    </location>
</feature>
<feature type="region of interest" description="Disordered" evidence="2">
    <location>
        <begin position="1"/>
        <end position="24"/>
    </location>
</feature>
<name>RL27_PELPD</name>
<dbReference type="EMBL" id="CP000482">
    <property type="protein sequence ID" value="ABK97982.1"/>
    <property type="molecule type" value="Genomic_DNA"/>
</dbReference>
<dbReference type="RefSeq" id="WP_011734296.1">
    <property type="nucleotide sequence ID" value="NC_008609.1"/>
</dbReference>
<dbReference type="SMR" id="A1AKW2"/>
<dbReference type="STRING" id="338966.Ppro_0348"/>
<dbReference type="KEGG" id="ppd:Ppro_0348"/>
<dbReference type="eggNOG" id="COG0211">
    <property type="taxonomic scope" value="Bacteria"/>
</dbReference>
<dbReference type="HOGENOM" id="CLU_095424_4_0_7"/>
<dbReference type="OrthoDB" id="9803474at2"/>
<dbReference type="Proteomes" id="UP000006732">
    <property type="component" value="Chromosome"/>
</dbReference>
<dbReference type="GO" id="GO:0022625">
    <property type="term" value="C:cytosolic large ribosomal subunit"/>
    <property type="evidence" value="ECO:0007669"/>
    <property type="project" value="TreeGrafter"/>
</dbReference>
<dbReference type="GO" id="GO:0003735">
    <property type="term" value="F:structural constituent of ribosome"/>
    <property type="evidence" value="ECO:0007669"/>
    <property type="project" value="InterPro"/>
</dbReference>
<dbReference type="GO" id="GO:0006412">
    <property type="term" value="P:translation"/>
    <property type="evidence" value="ECO:0007669"/>
    <property type="project" value="UniProtKB-UniRule"/>
</dbReference>
<dbReference type="FunFam" id="2.40.50.100:FF:000004">
    <property type="entry name" value="50S ribosomal protein L27"/>
    <property type="match status" value="1"/>
</dbReference>
<dbReference type="Gene3D" id="2.40.50.100">
    <property type="match status" value="1"/>
</dbReference>
<dbReference type="HAMAP" id="MF_00539">
    <property type="entry name" value="Ribosomal_bL27"/>
    <property type="match status" value="1"/>
</dbReference>
<dbReference type="InterPro" id="IPR001684">
    <property type="entry name" value="Ribosomal_bL27"/>
</dbReference>
<dbReference type="InterPro" id="IPR018261">
    <property type="entry name" value="Ribosomal_bL27_CS"/>
</dbReference>
<dbReference type="NCBIfam" id="TIGR00062">
    <property type="entry name" value="L27"/>
    <property type="match status" value="1"/>
</dbReference>
<dbReference type="PANTHER" id="PTHR15893:SF0">
    <property type="entry name" value="LARGE RIBOSOMAL SUBUNIT PROTEIN BL27M"/>
    <property type="match status" value="1"/>
</dbReference>
<dbReference type="PANTHER" id="PTHR15893">
    <property type="entry name" value="RIBOSOMAL PROTEIN L27"/>
    <property type="match status" value="1"/>
</dbReference>
<dbReference type="Pfam" id="PF01016">
    <property type="entry name" value="Ribosomal_L27"/>
    <property type="match status" value="1"/>
</dbReference>
<dbReference type="PRINTS" id="PR00063">
    <property type="entry name" value="RIBOSOMALL27"/>
</dbReference>
<dbReference type="SUPFAM" id="SSF110324">
    <property type="entry name" value="Ribosomal L27 protein-like"/>
    <property type="match status" value="1"/>
</dbReference>
<dbReference type="PROSITE" id="PS00831">
    <property type="entry name" value="RIBOSOMAL_L27"/>
    <property type="match status" value="1"/>
</dbReference>
<proteinExistence type="inferred from homology"/>
<gene>
    <name evidence="1" type="primary">rpmA</name>
    <name type="ordered locus">Ppro_0348</name>
</gene>
<organism>
    <name type="scientific">Pelobacter propionicus (strain DSM 2379 / NBRC 103807 / OttBd1)</name>
    <dbReference type="NCBI Taxonomy" id="338966"/>
    <lineage>
        <taxon>Bacteria</taxon>
        <taxon>Pseudomonadati</taxon>
        <taxon>Thermodesulfobacteriota</taxon>
        <taxon>Desulfuromonadia</taxon>
        <taxon>Desulfuromonadales</taxon>
        <taxon>Desulfuromonadaceae</taxon>
        <taxon>Pelobacter</taxon>
    </lineage>
</organism>
<keyword id="KW-1185">Reference proteome</keyword>
<keyword id="KW-0687">Ribonucleoprotein</keyword>
<keyword id="KW-0689">Ribosomal protein</keyword>
<accession>A1AKW2</accession>
<evidence type="ECO:0000255" key="1">
    <source>
        <dbReference type="HAMAP-Rule" id="MF_00539"/>
    </source>
</evidence>
<evidence type="ECO:0000256" key="2">
    <source>
        <dbReference type="SAM" id="MobiDB-lite"/>
    </source>
</evidence>
<evidence type="ECO:0000305" key="3"/>